<feature type="chain" id="PRO_1000137728" description="Chaperone protein DnaJ">
    <location>
        <begin position="1"/>
        <end position="378"/>
    </location>
</feature>
<feature type="domain" description="J" evidence="1">
    <location>
        <begin position="5"/>
        <end position="70"/>
    </location>
</feature>
<feature type="repeat" description="CXXCXGXG motif">
    <location>
        <begin position="146"/>
        <end position="153"/>
    </location>
</feature>
<feature type="repeat" description="CXXCXGXG motif">
    <location>
        <begin position="163"/>
        <end position="170"/>
    </location>
</feature>
<feature type="repeat" description="CXXCXGXG motif">
    <location>
        <begin position="185"/>
        <end position="192"/>
    </location>
</feature>
<feature type="repeat" description="CXXCXGXG motif">
    <location>
        <begin position="199"/>
        <end position="206"/>
    </location>
</feature>
<feature type="zinc finger region" description="CR-type" evidence="1">
    <location>
        <begin position="133"/>
        <end position="211"/>
    </location>
</feature>
<feature type="binding site" evidence="1">
    <location>
        <position position="146"/>
    </location>
    <ligand>
        <name>Zn(2+)</name>
        <dbReference type="ChEBI" id="CHEBI:29105"/>
        <label>1</label>
    </ligand>
</feature>
<feature type="binding site" evidence="1">
    <location>
        <position position="149"/>
    </location>
    <ligand>
        <name>Zn(2+)</name>
        <dbReference type="ChEBI" id="CHEBI:29105"/>
        <label>1</label>
    </ligand>
</feature>
<feature type="binding site" evidence="1">
    <location>
        <position position="163"/>
    </location>
    <ligand>
        <name>Zn(2+)</name>
        <dbReference type="ChEBI" id="CHEBI:29105"/>
        <label>2</label>
    </ligand>
</feature>
<feature type="binding site" evidence="1">
    <location>
        <position position="166"/>
    </location>
    <ligand>
        <name>Zn(2+)</name>
        <dbReference type="ChEBI" id="CHEBI:29105"/>
        <label>2</label>
    </ligand>
</feature>
<feature type="binding site" evidence="1">
    <location>
        <position position="185"/>
    </location>
    <ligand>
        <name>Zn(2+)</name>
        <dbReference type="ChEBI" id="CHEBI:29105"/>
        <label>2</label>
    </ligand>
</feature>
<feature type="binding site" evidence="1">
    <location>
        <position position="188"/>
    </location>
    <ligand>
        <name>Zn(2+)</name>
        <dbReference type="ChEBI" id="CHEBI:29105"/>
        <label>2</label>
    </ligand>
</feature>
<feature type="binding site" evidence="1">
    <location>
        <position position="199"/>
    </location>
    <ligand>
        <name>Zn(2+)</name>
        <dbReference type="ChEBI" id="CHEBI:29105"/>
        <label>1</label>
    </ligand>
</feature>
<feature type="binding site" evidence="1">
    <location>
        <position position="202"/>
    </location>
    <ligand>
        <name>Zn(2+)</name>
        <dbReference type="ChEBI" id="CHEBI:29105"/>
        <label>1</label>
    </ligand>
</feature>
<reference key="1">
    <citation type="submission" date="2008-02" db="EMBL/GenBank/DDBJ databases">
        <title>Complete sequence of Shewanella woodyi ATCC 51908.</title>
        <authorList>
            <consortium name="US DOE Joint Genome Institute"/>
            <person name="Copeland A."/>
            <person name="Lucas S."/>
            <person name="Lapidus A."/>
            <person name="Glavina del Rio T."/>
            <person name="Dalin E."/>
            <person name="Tice H."/>
            <person name="Bruce D."/>
            <person name="Goodwin L."/>
            <person name="Pitluck S."/>
            <person name="Sims D."/>
            <person name="Brettin T."/>
            <person name="Detter J.C."/>
            <person name="Han C."/>
            <person name="Kuske C.R."/>
            <person name="Schmutz J."/>
            <person name="Larimer F."/>
            <person name="Land M."/>
            <person name="Hauser L."/>
            <person name="Kyrpides N."/>
            <person name="Lykidis A."/>
            <person name="Zhao J.-S."/>
            <person name="Richardson P."/>
        </authorList>
    </citation>
    <scope>NUCLEOTIDE SEQUENCE [LARGE SCALE GENOMIC DNA]</scope>
    <source>
        <strain>ATCC 51908 / MS32</strain>
    </source>
</reference>
<accession>B1KRT1</accession>
<protein>
    <recommendedName>
        <fullName evidence="1">Chaperone protein DnaJ</fullName>
    </recommendedName>
</protein>
<comment type="function">
    <text evidence="1">Participates actively in the response to hyperosmotic and heat shock by preventing the aggregation of stress-denatured proteins and by disaggregating proteins, also in an autonomous, DnaK-independent fashion. Unfolded proteins bind initially to DnaJ; upon interaction with the DnaJ-bound protein, DnaK hydrolyzes its bound ATP, resulting in the formation of a stable complex. GrpE releases ADP from DnaK; ATP binding to DnaK triggers the release of the substrate protein, thus completing the reaction cycle. Several rounds of ATP-dependent interactions between DnaJ, DnaK and GrpE are required for fully efficient folding. Also involved, together with DnaK and GrpE, in the DNA replication of plasmids through activation of initiation proteins.</text>
</comment>
<comment type="cofactor">
    <cofactor evidence="1">
        <name>Zn(2+)</name>
        <dbReference type="ChEBI" id="CHEBI:29105"/>
    </cofactor>
    <text evidence="1">Binds 2 Zn(2+) ions per monomer.</text>
</comment>
<comment type="subunit">
    <text evidence="1">Homodimer.</text>
</comment>
<comment type="subcellular location">
    <subcellularLocation>
        <location evidence="1">Cytoplasm</location>
    </subcellularLocation>
</comment>
<comment type="domain">
    <text evidence="1">The J domain is necessary and sufficient to stimulate DnaK ATPase activity. Zinc center 1 plays an important role in the autonomous, DnaK-independent chaperone activity of DnaJ. Zinc center 2 is essential for interaction with DnaK and for DnaJ activity.</text>
</comment>
<comment type="similarity">
    <text evidence="1">Belongs to the DnaJ family.</text>
</comment>
<dbReference type="EMBL" id="CP000961">
    <property type="protein sequence ID" value="ACA87846.1"/>
    <property type="molecule type" value="Genomic_DNA"/>
</dbReference>
<dbReference type="RefSeq" id="WP_012326179.1">
    <property type="nucleotide sequence ID" value="NC_010506.1"/>
</dbReference>
<dbReference type="SMR" id="B1KRT1"/>
<dbReference type="STRING" id="392500.Swoo_3582"/>
<dbReference type="KEGG" id="swd:Swoo_3582"/>
<dbReference type="eggNOG" id="COG0484">
    <property type="taxonomic scope" value="Bacteria"/>
</dbReference>
<dbReference type="HOGENOM" id="CLU_017633_0_7_6"/>
<dbReference type="Proteomes" id="UP000002168">
    <property type="component" value="Chromosome"/>
</dbReference>
<dbReference type="GO" id="GO:0005737">
    <property type="term" value="C:cytoplasm"/>
    <property type="evidence" value="ECO:0007669"/>
    <property type="project" value="UniProtKB-SubCell"/>
</dbReference>
<dbReference type="GO" id="GO:0005524">
    <property type="term" value="F:ATP binding"/>
    <property type="evidence" value="ECO:0007669"/>
    <property type="project" value="InterPro"/>
</dbReference>
<dbReference type="GO" id="GO:0031072">
    <property type="term" value="F:heat shock protein binding"/>
    <property type="evidence" value="ECO:0007669"/>
    <property type="project" value="InterPro"/>
</dbReference>
<dbReference type="GO" id="GO:0051082">
    <property type="term" value="F:unfolded protein binding"/>
    <property type="evidence" value="ECO:0007669"/>
    <property type="project" value="UniProtKB-UniRule"/>
</dbReference>
<dbReference type="GO" id="GO:0008270">
    <property type="term" value="F:zinc ion binding"/>
    <property type="evidence" value="ECO:0007669"/>
    <property type="project" value="UniProtKB-UniRule"/>
</dbReference>
<dbReference type="GO" id="GO:0051085">
    <property type="term" value="P:chaperone cofactor-dependent protein refolding"/>
    <property type="evidence" value="ECO:0007669"/>
    <property type="project" value="TreeGrafter"/>
</dbReference>
<dbReference type="GO" id="GO:0006260">
    <property type="term" value="P:DNA replication"/>
    <property type="evidence" value="ECO:0007669"/>
    <property type="project" value="UniProtKB-KW"/>
</dbReference>
<dbReference type="GO" id="GO:0042026">
    <property type="term" value="P:protein refolding"/>
    <property type="evidence" value="ECO:0007669"/>
    <property type="project" value="TreeGrafter"/>
</dbReference>
<dbReference type="GO" id="GO:0009408">
    <property type="term" value="P:response to heat"/>
    <property type="evidence" value="ECO:0007669"/>
    <property type="project" value="InterPro"/>
</dbReference>
<dbReference type="CDD" id="cd06257">
    <property type="entry name" value="DnaJ"/>
    <property type="match status" value="1"/>
</dbReference>
<dbReference type="CDD" id="cd10747">
    <property type="entry name" value="DnaJ_C"/>
    <property type="match status" value="1"/>
</dbReference>
<dbReference type="CDD" id="cd10719">
    <property type="entry name" value="DnaJ_zf"/>
    <property type="match status" value="1"/>
</dbReference>
<dbReference type="FunFam" id="1.10.287.110:FF:000034">
    <property type="entry name" value="Chaperone protein DnaJ"/>
    <property type="match status" value="1"/>
</dbReference>
<dbReference type="FunFam" id="2.10.230.10:FF:000002">
    <property type="entry name" value="Molecular chaperone DnaJ"/>
    <property type="match status" value="1"/>
</dbReference>
<dbReference type="FunFam" id="2.60.260.20:FF:000004">
    <property type="entry name" value="Molecular chaperone DnaJ"/>
    <property type="match status" value="1"/>
</dbReference>
<dbReference type="Gene3D" id="1.10.287.110">
    <property type="entry name" value="DnaJ domain"/>
    <property type="match status" value="1"/>
</dbReference>
<dbReference type="Gene3D" id="2.10.230.10">
    <property type="entry name" value="Heat shock protein DnaJ, cysteine-rich domain"/>
    <property type="match status" value="1"/>
</dbReference>
<dbReference type="Gene3D" id="2.60.260.20">
    <property type="entry name" value="Urease metallochaperone UreE, N-terminal domain"/>
    <property type="match status" value="2"/>
</dbReference>
<dbReference type="HAMAP" id="MF_01152">
    <property type="entry name" value="DnaJ"/>
    <property type="match status" value="1"/>
</dbReference>
<dbReference type="InterPro" id="IPR012724">
    <property type="entry name" value="DnaJ"/>
</dbReference>
<dbReference type="InterPro" id="IPR002939">
    <property type="entry name" value="DnaJ_C"/>
</dbReference>
<dbReference type="InterPro" id="IPR001623">
    <property type="entry name" value="DnaJ_domain"/>
</dbReference>
<dbReference type="InterPro" id="IPR018253">
    <property type="entry name" value="DnaJ_domain_CS"/>
</dbReference>
<dbReference type="InterPro" id="IPR008971">
    <property type="entry name" value="HSP40/DnaJ_pept-bd"/>
</dbReference>
<dbReference type="InterPro" id="IPR001305">
    <property type="entry name" value="HSP_DnaJ_Cys-rich_dom"/>
</dbReference>
<dbReference type="InterPro" id="IPR036410">
    <property type="entry name" value="HSP_DnaJ_Cys-rich_dom_sf"/>
</dbReference>
<dbReference type="InterPro" id="IPR036869">
    <property type="entry name" value="J_dom_sf"/>
</dbReference>
<dbReference type="NCBIfam" id="TIGR02349">
    <property type="entry name" value="DnaJ_bact"/>
    <property type="match status" value="1"/>
</dbReference>
<dbReference type="NCBIfam" id="NF008035">
    <property type="entry name" value="PRK10767.1"/>
    <property type="match status" value="1"/>
</dbReference>
<dbReference type="PANTHER" id="PTHR43096:SF48">
    <property type="entry name" value="CHAPERONE PROTEIN DNAJ"/>
    <property type="match status" value="1"/>
</dbReference>
<dbReference type="PANTHER" id="PTHR43096">
    <property type="entry name" value="DNAJ HOMOLOG 1, MITOCHONDRIAL-RELATED"/>
    <property type="match status" value="1"/>
</dbReference>
<dbReference type="Pfam" id="PF00226">
    <property type="entry name" value="DnaJ"/>
    <property type="match status" value="1"/>
</dbReference>
<dbReference type="Pfam" id="PF01556">
    <property type="entry name" value="DnaJ_C"/>
    <property type="match status" value="1"/>
</dbReference>
<dbReference type="Pfam" id="PF00684">
    <property type="entry name" value="DnaJ_CXXCXGXG"/>
    <property type="match status" value="1"/>
</dbReference>
<dbReference type="PRINTS" id="PR00625">
    <property type="entry name" value="JDOMAIN"/>
</dbReference>
<dbReference type="SMART" id="SM00271">
    <property type="entry name" value="DnaJ"/>
    <property type="match status" value="1"/>
</dbReference>
<dbReference type="SUPFAM" id="SSF46565">
    <property type="entry name" value="Chaperone J-domain"/>
    <property type="match status" value="1"/>
</dbReference>
<dbReference type="SUPFAM" id="SSF57938">
    <property type="entry name" value="DnaJ/Hsp40 cysteine-rich domain"/>
    <property type="match status" value="1"/>
</dbReference>
<dbReference type="SUPFAM" id="SSF49493">
    <property type="entry name" value="HSP40/DnaJ peptide-binding domain"/>
    <property type="match status" value="2"/>
</dbReference>
<dbReference type="PROSITE" id="PS00636">
    <property type="entry name" value="DNAJ_1"/>
    <property type="match status" value="1"/>
</dbReference>
<dbReference type="PROSITE" id="PS50076">
    <property type="entry name" value="DNAJ_2"/>
    <property type="match status" value="1"/>
</dbReference>
<dbReference type="PROSITE" id="PS51188">
    <property type="entry name" value="ZF_CR"/>
    <property type="match status" value="1"/>
</dbReference>
<evidence type="ECO:0000255" key="1">
    <source>
        <dbReference type="HAMAP-Rule" id="MF_01152"/>
    </source>
</evidence>
<keyword id="KW-0143">Chaperone</keyword>
<keyword id="KW-0963">Cytoplasm</keyword>
<keyword id="KW-0235">DNA replication</keyword>
<keyword id="KW-0479">Metal-binding</keyword>
<keyword id="KW-1185">Reference proteome</keyword>
<keyword id="KW-0677">Repeat</keyword>
<keyword id="KW-0346">Stress response</keyword>
<keyword id="KW-0862">Zinc</keyword>
<keyword id="KW-0863">Zinc-finger</keyword>
<organism>
    <name type="scientific">Shewanella woodyi (strain ATCC 51908 / MS32)</name>
    <dbReference type="NCBI Taxonomy" id="392500"/>
    <lineage>
        <taxon>Bacteria</taxon>
        <taxon>Pseudomonadati</taxon>
        <taxon>Pseudomonadota</taxon>
        <taxon>Gammaproteobacteria</taxon>
        <taxon>Alteromonadales</taxon>
        <taxon>Shewanellaceae</taxon>
        <taxon>Shewanella</taxon>
    </lineage>
</organism>
<proteinExistence type="inferred from homology"/>
<gene>
    <name evidence="1" type="primary">dnaJ</name>
    <name type="ordered locus">Swoo_3582</name>
</gene>
<name>DNAJ_SHEWM</name>
<sequence>MSKRDYYEVLSVGRDASEREIKKAYKRLAMKFHPDRNPGDKAAETSFKEVKEAYEILTDSDKKAAYDQFGHAGVDPNRGGGGFGGNADFGDVFGDVFGDIFGGGRRGGGQRQAARGSDLRYNLELSLEEAVKGLTKELRIPTLAHCDTCDGSGAKKGTSPTTCGTCHGQGQVQMRQGFFAVQQACPTCHGRGKIIKDPCNSCHGEGRVEKSKTLSVKIPAGVDNGDRIRLSGEGEAGEFGAPPGDLYVQVSVREHAIFVRDGNNLYCEVPISFGKAALGGEIEVPTLDGKVNLKIPAETQTGRMFRMRGKGVKSVRSHAVGDLLCKVVMETPVKLNERQKELLREFDETLAGSSSKKHSPKAEGFFDGVKKFFQDLNS</sequence>